<evidence type="ECO:0000255" key="1">
    <source>
        <dbReference type="HAMAP-Rule" id="MF_00509"/>
    </source>
</evidence>
<evidence type="ECO:0000256" key="2">
    <source>
        <dbReference type="SAM" id="MobiDB-lite"/>
    </source>
</evidence>
<reference key="1">
    <citation type="journal article" date="2009" name="BMC Genomics">
        <title>Pseudogene accumulation in the evolutionary histories of Salmonella enterica serovars Paratyphi A and Typhi.</title>
        <authorList>
            <person name="Holt K.E."/>
            <person name="Thomson N.R."/>
            <person name="Wain J."/>
            <person name="Langridge G.C."/>
            <person name="Hasan R."/>
            <person name="Bhutta Z.A."/>
            <person name="Quail M.A."/>
            <person name="Norbertczak H."/>
            <person name="Walker D."/>
            <person name="Simmonds M."/>
            <person name="White B."/>
            <person name="Bason N."/>
            <person name="Mungall K."/>
            <person name="Dougan G."/>
            <person name="Parkhill J."/>
        </authorList>
    </citation>
    <scope>NUCLEOTIDE SEQUENCE [LARGE SCALE GENOMIC DNA]</scope>
    <source>
        <strain>AKU_12601</strain>
    </source>
</reference>
<proteinExistence type="inferred from homology"/>
<comment type="function">
    <text evidence="1">Essential cell division protein that stabilizes the FtsZ protofilaments by cross-linking them and that serves as a cytoplasmic membrane anchor for the Z ring. Also required for the recruitment to the septal ring of downstream cell division proteins.</text>
</comment>
<comment type="subunit">
    <text evidence="1">Interacts with FtsZ via their C-terminal domains.</text>
</comment>
<comment type="subcellular location">
    <subcellularLocation>
        <location evidence="1">Cell inner membrane</location>
        <topology evidence="1">Single-pass type I membrane protein</topology>
    </subcellularLocation>
    <text evidence="1">Localizes to the Z ring in an FtsZ-dependent manner.</text>
</comment>
<comment type="similarity">
    <text evidence="1">Belongs to the ZipA family.</text>
</comment>
<keyword id="KW-0131">Cell cycle</keyword>
<keyword id="KW-0132">Cell division</keyword>
<keyword id="KW-0997">Cell inner membrane</keyword>
<keyword id="KW-1003">Cell membrane</keyword>
<keyword id="KW-0472">Membrane</keyword>
<keyword id="KW-0812">Transmembrane</keyword>
<keyword id="KW-1133">Transmembrane helix</keyword>
<sequence>MMQDLRLILIIVGAIAIIALLVHGFWTSRKERSSMFRDRPLKRMKSKRDDDSYDDDVEEDEGVGEVRVHRVNHAPGQSQEHDAPRQSPQHQYQPPYASAQPRPAAPPQPQAPMQQPVQQPVQPAPQPQQVQPSAPPVQPPQQQPAPPSQAPQPVAQPAPPPSAQTFQPAEPVVEAEPVVEEAPVVEKPQRKEAVIIMNVAAHHGSELNGEVLLNSIQQSGFKFGDMNIFHRHLSPDGSGPALFSLANMVNPGTFDPEMTDFTTPGVTIFMQVPSYGDALQNFKLMLQSAQHIADEVGGVVLDDQRRMMTPQKLREYQDRIREVMDANA</sequence>
<name>ZIPA_SALPK</name>
<organism>
    <name type="scientific">Salmonella paratyphi A (strain AKU_12601)</name>
    <dbReference type="NCBI Taxonomy" id="554290"/>
    <lineage>
        <taxon>Bacteria</taxon>
        <taxon>Pseudomonadati</taxon>
        <taxon>Pseudomonadota</taxon>
        <taxon>Gammaproteobacteria</taxon>
        <taxon>Enterobacterales</taxon>
        <taxon>Enterobacteriaceae</taxon>
        <taxon>Salmonella</taxon>
    </lineage>
</organism>
<feature type="chain" id="PRO_1000127230" description="Cell division protein ZipA">
    <location>
        <begin position="1"/>
        <end position="328"/>
    </location>
</feature>
<feature type="topological domain" description="Periplasmic" evidence="1">
    <location>
        <begin position="1"/>
        <end position="6"/>
    </location>
</feature>
<feature type="transmembrane region" description="Helical" evidence="1">
    <location>
        <begin position="7"/>
        <end position="27"/>
    </location>
</feature>
<feature type="topological domain" description="Cytoplasmic" evidence="1">
    <location>
        <begin position="28"/>
        <end position="328"/>
    </location>
</feature>
<feature type="region of interest" description="Disordered" evidence="2">
    <location>
        <begin position="42"/>
        <end position="178"/>
    </location>
</feature>
<feature type="compositionally biased region" description="Acidic residues" evidence="2">
    <location>
        <begin position="51"/>
        <end position="63"/>
    </location>
</feature>
<feature type="compositionally biased region" description="Low complexity" evidence="2">
    <location>
        <begin position="85"/>
        <end position="102"/>
    </location>
</feature>
<feature type="compositionally biased region" description="Low complexity" evidence="2">
    <location>
        <begin position="111"/>
        <end position="132"/>
    </location>
</feature>
<feature type="compositionally biased region" description="Pro residues" evidence="2">
    <location>
        <begin position="133"/>
        <end position="162"/>
    </location>
</feature>
<feature type="compositionally biased region" description="Low complexity" evidence="2">
    <location>
        <begin position="168"/>
        <end position="178"/>
    </location>
</feature>
<dbReference type="EMBL" id="FM200053">
    <property type="protein sequence ID" value="CAR58534.1"/>
    <property type="molecule type" value="Genomic_DNA"/>
</dbReference>
<dbReference type="RefSeq" id="WP_000983126.1">
    <property type="nucleotide sequence ID" value="NC_011147.1"/>
</dbReference>
<dbReference type="SMR" id="B5BB71"/>
<dbReference type="KEGG" id="sek:SSPA0410"/>
<dbReference type="HOGENOM" id="CLU_030174_1_0_6"/>
<dbReference type="Proteomes" id="UP000001869">
    <property type="component" value="Chromosome"/>
</dbReference>
<dbReference type="GO" id="GO:0032153">
    <property type="term" value="C:cell division site"/>
    <property type="evidence" value="ECO:0007669"/>
    <property type="project" value="UniProtKB-UniRule"/>
</dbReference>
<dbReference type="GO" id="GO:0005886">
    <property type="term" value="C:plasma membrane"/>
    <property type="evidence" value="ECO:0007669"/>
    <property type="project" value="UniProtKB-SubCell"/>
</dbReference>
<dbReference type="GO" id="GO:0000917">
    <property type="term" value="P:division septum assembly"/>
    <property type="evidence" value="ECO:0007669"/>
    <property type="project" value="TreeGrafter"/>
</dbReference>
<dbReference type="GO" id="GO:0043093">
    <property type="term" value="P:FtsZ-dependent cytokinesis"/>
    <property type="evidence" value="ECO:0007669"/>
    <property type="project" value="UniProtKB-UniRule"/>
</dbReference>
<dbReference type="CDD" id="cd00231">
    <property type="entry name" value="ZipA"/>
    <property type="match status" value="1"/>
</dbReference>
<dbReference type="FunFam" id="3.30.1400.10:FF:000001">
    <property type="entry name" value="Cell division protein ZipA"/>
    <property type="match status" value="1"/>
</dbReference>
<dbReference type="Gene3D" id="3.30.1400.10">
    <property type="entry name" value="ZipA, C-terminal FtsZ-binding domain"/>
    <property type="match status" value="1"/>
</dbReference>
<dbReference type="HAMAP" id="MF_00509">
    <property type="entry name" value="ZipA"/>
    <property type="match status" value="1"/>
</dbReference>
<dbReference type="InterPro" id="IPR011919">
    <property type="entry name" value="Cell_div_ZipA"/>
</dbReference>
<dbReference type="InterPro" id="IPR007449">
    <property type="entry name" value="ZipA_FtsZ-bd_C"/>
</dbReference>
<dbReference type="InterPro" id="IPR036765">
    <property type="entry name" value="ZipA_FtsZ-bd_C_sf"/>
</dbReference>
<dbReference type="NCBIfam" id="TIGR02205">
    <property type="entry name" value="septum_zipA"/>
    <property type="match status" value="1"/>
</dbReference>
<dbReference type="PANTHER" id="PTHR38685">
    <property type="entry name" value="CELL DIVISION PROTEIN ZIPA"/>
    <property type="match status" value="1"/>
</dbReference>
<dbReference type="PANTHER" id="PTHR38685:SF1">
    <property type="entry name" value="CELL DIVISION PROTEIN ZIPA"/>
    <property type="match status" value="1"/>
</dbReference>
<dbReference type="Pfam" id="PF04354">
    <property type="entry name" value="ZipA_C"/>
    <property type="match status" value="1"/>
</dbReference>
<dbReference type="SMART" id="SM00771">
    <property type="entry name" value="ZipA_C"/>
    <property type="match status" value="1"/>
</dbReference>
<dbReference type="SUPFAM" id="SSF64383">
    <property type="entry name" value="Cell-division protein ZipA, C-terminal domain"/>
    <property type="match status" value="1"/>
</dbReference>
<protein>
    <recommendedName>
        <fullName evidence="1">Cell division protein ZipA</fullName>
    </recommendedName>
</protein>
<accession>B5BB71</accession>
<gene>
    <name evidence="1" type="primary">zipA</name>
    <name type="ordered locus">SSPA0410</name>
</gene>